<reference key="1">
    <citation type="journal article" date="2007" name="Science">
        <title>The Calyptogena magnifica chemoautotrophic symbiont genome.</title>
        <authorList>
            <person name="Newton I.L.G."/>
            <person name="Woyke T."/>
            <person name="Auchtung T.A."/>
            <person name="Dilly G.F."/>
            <person name="Dutton R.J."/>
            <person name="Fisher M.C."/>
            <person name="Fontanez K.M."/>
            <person name="Lau E."/>
            <person name="Stewart F.J."/>
            <person name="Richardson P.M."/>
            <person name="Barry K.W."/>
            <person name="Saunders E."/>
            <person name="Detter J.C."/>
            <person name="Wu D."/>
            <person name="Eisen J.A."/>
            <person name="Cavanaugh C.M."/>
        </authorList>
    </citation>
    <scope>NUCLEOTIDE SEQUENCE [LARGE SCALE GENOMIC DNA]</scope>
</reference>
<accession>A1AWT6</accession>
<name>SYT_RUTMC</name>
<proteinExistence type="inferred from homology"/>
<organism>
    <name type="scientific">Ruthia magnifica subsp. Calyptogena magnifica</name>
    <dbReference type="NCBI Taxonomy" id="413404"/>
    <lineage>
        <taxon>Bacteria</taxon>
        <taxon>Pseudomonadati</taxon>
        <taxon>Pseudomonadota</taxon>
        <taxon>Gammaproteobacteria</taxon>
        <taxon>Candidatus Pseudothioglobaceae</taxon>
        <taxon>Candidatus Ruthturnera</taxon>
    </lineage>
</organism>
<gene>
    <name evidence="1" type="primary">thrS</name>
    <name type="ordered locus">Rmag_0648</name>
</gene>
<dbReference type="EC" id="6.1.1.3" evidence="1"/>
<dbReference type="EMBL" id="CP000488">
    <property type="protein sequence ID" value="ABL02393.1"/>
    <property type="molecule type" value="Genomic_DNA"/>
</dbReference>
<dbReference type="RefSeq" id="WP_011738018.1">
    <property type="nucleotide sequence ID" value="NC_008610.1"/>
</dbReference>
<dbReference type="SMR" id="A1AWT6"/>
<dbReference type="STRING" id="413404.Rmag_0648"/>
<dbReference type="KEGG" id="rma:Rmag_0648"/>
<dbReference type="eggNOG" id="COG0441">
    <property type="taxonomic scope" value="Bacteria"/>
</dbReference>
<dbReference type="HOGENOM" id="CLU_008554_0_1_6"/>
<dbReference type="OrthoDB" id="9802304at2"/>
<dbReference type="Proteomes" id="UP000002587">
    <property type="component" value="Chromosome"/>
</dbReference>
<dbReference type="GO" id="GO:0005737">
    <property type="term" value="C:cytoplasm"/>
    <property type="evidence" value="ECO:0007669"/>
    <property type="project" value="UniProtKB-SubCell"/>
</dbReference>
<dbReference type="GO" id="GO:0005524">
    <property type="term" value="F:ATP binding"/>
    <property type="evidence" value="ECO:0007669"/>
    <property type="project" value="UniProtKB-UniRule"/>
</dbReference>
<dbReference type="GO" id="GO:0046872">
    <property type="term" value="F:metal ion binding"/>
    <property type="evidence" value="ECO:0007669"/>
    <property type="project" value="UniProtKB-KW"/>
</dbReference>
<dbReference type="GO" id="GO:0004829">
    <property type="term" value="F:threonine-tRNA ligase activity"/>
    <property type="evidence" value="ECO:0007669"/>
    <property type="project" value="UniProtKB-UniRule"/>
</dbReference>
<dbReference type="GO" id="GO:0000049">
    <property type="term" value="F:tRNA binding"/>
    <property type="evidence" value="ECO:0007669"/>
    <property type="project" value="UniProtKB-KW"/>
</dbReference>
<dbReference type="GO" id="GO:0006435">
    <property type="term" value="P:threonyl-tRNA aminoacylation"/>
    <property type="evidence" value="ECO:0007669"/>
    <property type="project" value="UniProtKB-UniRule"/>
</dbReference>
<dbReference type="CDD" id="cd01667">
    <property type="entry name" value="TGS_ThrRS"/>
    <property type="match status" value="1"/>
</dbReference>
<dbReference type="CDD" id="cd00860">
    <property type="entry name" value="ThrRS_anticodon"/>
    <property type="match status" value="1"/>
</dbReference>
<dbReference type="CDD" id="cd00771">
    <property type="entry name" value="ThrRS_core"/>
    <property type="match status" value="1"/>
</dbReference>
<dbReference type="FunFam" id="3.10.20.30:FF:000005">
    <property type="entry name" value="Threonine--tRNA ligase"/>
    <property type="match status" value="1"/>
</dbReference>
<dbReference type="FunFam" id="3.30.54.20:FF:000002">
    <property type="entry name" value="Threonine--tRNA ligase"/>
    <property type="match status" value="1"/>
</dbReference>
<dbReference type="FunFam" id="3.30.930.10:FF:000002">
    <property type="entry name" value="Threonine--tRNA ligase"/>
    <property type="match status" value="1"/>
</dbReference>
<dbReference type="FunFam" id="3.40.50.800:FF:000001">
    <property type="entry name" value="Threonine--tRNA ligase"/>
    <property type="match status" value="1"/>
</dbReference>
<dbReference type="FunFam" id="3.30.980.10:FF:000005">
    <property type="entry name" value="Threonyl-tRNA synthetase, mitochondrial"/>
    <property type="match status" value="1"/>
</dbReference>
<dbReference type="Gene3D" id="3.10.20.30">
    <property type="match status" value="1"/>
</dbReference>
<dbReference type="Gene3D" id="3.30.54.20">
    <property type="match status" value="1"/>
</dbReference>
<dbReference type="Gene3D" id="3.40.50.800">
    <property type="entry name" value="Anticodon-binding domain"/>
    <property type="match status" value="1"/>
</dbReference>
<dbReference type="Gene3D" id="3.30.930.10">
    <property type="entry name" value="Bira Bifunctional Protein, Domain 2"/>
    <property type="match status" value="1"/>
</dbReference>
<dbReference type="Gene3D" id="3.30.980.10">
    <property type="entry name" value="Threonyl-trna Synthetase, Chain A, domain 2"/>
    <property type="match status" value="1"/>
</dbReference>
<dbReference type="HAMAP" id="MF_00184">
    <property type="entry name" value="Thr_tRNA_synth"/>
    <property type="match status" value="1"/>
</dbReference>
<dbReference type="InterPro" id="IPR002314">
    <property type="entry name" value="aa-tRNA-synt_IIb"/>
</dbReference>
<dbReference type="InterPro" id="IPR006195">
    <property type="entry name" value="aa-tRNA-synth_II"/>
</dbReference>
<dbReference type="InterPro" id="IPR045864">
    <property type="entry name" value="aa-tRNA-synth_II/BPL/LPL"/>
</dbReference>
<dbReference type="InterPro" id="IPR004154">
    <property type="entry name" value="Anticodon-bd"/>
</dbReference>
<dbReference type="InterPro" id="IPR036621">
    <property type="entry name" value="Anticodon-bd_dom_sf"/>
</dbReference>
<dbReference type="InterPro" id="IPR012675">
    <property type="entry name" value="Beta-grasp_dom_sf"/>
</dbReference>
<dbReference type="InterPro" id="IPR004095">
    <property type="entry name" value="TGS"/>
</dbReference>
<dbReference type="InterPro" id="IPR012676">
    <property type="entry name" value="TGS-like"/>
</dbReference>
<dbReference type="InterPro" id="IPR002320">
    <property type="entry name" value="Thr-tRNA-ligase_IIa"/>
</dbReference>
<dbReference type="InterPro" id="IPR018163">
    <property type="entry name" value="Thr/Ala-tRNA-synth_IIc_edit"/>
</dbReference>
<dbReference type="InterPro" id="IPR047246">
    <property type="entry name" value="ThrRS_anticodon"/>
</dbReference>
<dbReference type="InterPro" id="IPR033728">
    <property type="entry name" value="ThrRS_core"/>
</dbReference>
<dbReference type="InterPro" id="IPR012947">
    <property type="entry name" value="tRNA_SAD"/>
</dbReference>
<dbReference type="NCBIfam" id="TIGR00418">
    <property type="entry name" value="thrS"/>
    <property type="match status" value="1"/>
</dbReference>
<dbReference type="PANTHER" id="PTHR11451:SF44">
    <property type="entry name" value="THREONINE--TRNA LIGASE, CHLOROPLASTIC_MITOCHONDRIAL 2"/>
    <property type="match status" value="1"/>
</dbReference>
<dbReference type="PANTHER" id="PTHR11451">
    <property type="entry name" value="THREONINE-TRNA LIGASE"/>
    <property type="match status" value="1"/>
</dbReference>
<dbReference type="Pfam" id="PF03129">
    <property type="entry name" value="HGTP_anticodon"/>
    <property type="match status" value="1"/>
</dbReference>
<dbReference type="Pfam" id="PF02824">
    <property type="entry name" value="TGS"/>
    <property type="match status" value="1"/>
</dbReference>
<dbReference type="Pfam" id="PF00587">
    <property type="entry name" value="tRNA-synt_2b"/>
    <property type="match status" value="1"/>
</dbReference>
<dbReference type="Pfam" id="PF07973">
    <property type="entry name" value="tRNA_SAD"/>
    <property type="match status" value="1"/>
</dbReference>
<dbReference type="PRINTS" id="PR01047">
    <property type="entry name" value="TRNASYNTHTHR"/>
</dbReference>
<dbReference type="SMART" id="SM00863">
    <property type="entry name" value="tRNA_SAD"/>
    <property type="match status" value="1"/>
</dbReference>
<dbReference type="SUPFAM" id="SSF52954">
    <property type="entry name" value="Class II aaRS ABD-related"/>
    <property type="match status" value="1"/>
</dbReference>
<dbReference type="SUPFAM" id="SSF55681">
    <property type="entry name" value="Class II aaRS and biotin synthetases"/>
    <property type="match status" value="1"/>
</dbReference>
<dbReference type="SUPFAM" id="SSF81271">
    <property type="entry name" value="TGS-like"/>
    <property type="match status" value="1"/>
</dbReference>
<dbReference type="SUPFAM" id="SSF55186">
    <property type="entry name" value="ThrRS/AlaRS common domain"/>
    <property type="match status" value="1"/>
</dbReference>
<dbReference type="PROSITE" id="PS50862">
    <property type="entry name" value="AA_TRNA_LIGASE_II"/>
    <property type="match status" value="1"/>
</dbReference>
<dbReference type="PROSITE" id="PS51880">
    <property type="entry name" value="TGS"/>
    <property type="match status" value="1"/>
</dbReference>
<protein>
    <recommendedName>
        <fullName evidence="1">Threonine--tRNA ligase</fullName>
        <ecNumber evidence="1">6.1.1.3</ecNumber>
    </recommendedName>
    <alternativeName>
        <fullName evidence="1">Threonyl-tRNA synthetase</fullName>
        <shortName evidence="1">ThrRS</shortName>
    </alternativeName>
</protein>
<evidence type="ECO:0000255" key="1">
    <source>
        <dbReference type="HAMAP-Rule" id="MF_00184"/>
    </source>
</evidence>
<evidence type="ECO:0000255" key="2">
    <source>
        <dbReference type="PROSITE-ProRule" id="PRU01228"/>
    </source>
</evidence>
<comment type="function">
    <text evidence="1">Catalyzes the attachment of threonine to tRNA(Thr) in a two-step reaction: L-threonine is first activated by ATP to form Thr-AMP and then transferred to the acceptor end of tRNA(Thr). Also edits incorrectly charged L-seryl-tRNA(Thr).</text>
</comment>
<comment type="catalytic activity">
    <reaction evidence="1">
        <text>tRNA(Thr) + L-threonine + ATP = L-threonyl-tRNA(Thr) + AMP + diphosphate + H(+)</text>
        <dbReference type="Rhea" id="RHEA:24624"/>
        <dbReference type="Rhea" id="RHEA-COMP:9670"/>
        <dbReference type="Rhea" id="RHEA-COMP:9704"/>
        <dbReference type="ChEBI" id="CHEBI:15378"/>
        <dbReference type="ChEBI" id="CHEBI:30616"/>
        <dbReference type="ChEBI" id="CHEBI:33019"/>
        <dbReference type="ChEBI" id="CHEBI:57926"/>
        <dbReference type="ChEBI" id="CHEBI:78442"/>
        <dbReference type="ChEBI" id="CHEBI:78534"/>
        <dbReference type="ChEBI" id="CHEBI:456215"/>
        <dbReference type="EC" id="6.1.1.3"/>
    </reaction>
</comment>
<comment type="cofactor">
    <cofactor evidence="1">
        <name>Zn(2+)</name>
        <dbReference type="ChEBI" id="CHEBI:29105"/>
    </cofactor>
    <text evidence="1">Binds 1 zinc ion per subunit.</text>
</comment>
<comment type="subunit">
    <text evidence="1">Homodimer.</text>
</comment>
<comment type="subcellular location">
    <subcellularLocation>
        <location evidence="1">Cytoplasm</location>
    </subcellularLocation>
</comment>
<comment type="similarity">
    <text evidence="1">Belongs to the class-II aminoacyl-tRNA synthetase family.</text>
</comment>
<keyword id="KW-0030">Aminoacyl-tRNA synthetase</keyword>
<keyword id="KW-0067">ATP-binding</keyword>
<keyword id="KW-0963">Cytoplasm</keyword>
<keyword id="KW-0436">Ligase</keyword>
<keyword id="KW-0479">Metal-binding</keyword>
<keyword id="KW-0547">Nucleotide-binding</keyword>
<keyword id="KW-0648">Protein biosynthesis</keyword>
<keyword id="KW-0694">RNA-binding</keyword>
<keyword id="KW-0820">tRNA-binding</keyword>
<keyword id="KW-0862">Zinc</keyword>
<sequence>MPIITLPDGTQKIFEQVVSVTQVAKSIGLSLAKAALAGEVDGQLVDTSFLIKTDANLAIITANDDKGLEIIRHSTAHLLAQATQMLYPKAQVTIGPVIDNGFYYDFVYKDGFSESDLAKIEKNMHKLVKQNLKIERFEMSRNEAIQFFKDKGEYYKTEIIESIPAGQTLSLYKQGNFIDLCRGPHVPLTAKLKAFKLMKLAGAYWRGDSNNEMLQRVYGTAWATKQDLEEHLHRLEEASRRDHRKIGKIQDLFHIQEEAPGMIFWHAKGWTLCQLIEQYMRGIFKDNDYQEVHTPQLIDKSLWEKSGHWEKFGDTMFTTSSENRDYAVKPMNCPAHIQIYNQGLKSYRDLPLRLAEFGSCHRNEPSGTLHGIMRVRNFVQDDGHIFCTPEQIQVEVSTFIDLTFAVYKHFGFDKVDIKLSTRPENHVGSDEVWDKAEAALAEALDAKVIKWEFQKGEGAFYGPKIEFVLKDCLERQWQCGTLQVDFSMPERLDAQFIDENNIKQTPVVLHRAILGSLERFVGILIEHYEGAYPCWLTPIQAVVINISGKQADFVIDITKKLKKQGLRVISDLRNEKIGFKIREHSLQRYPYILIVGDREMEKDQISVRQRGGKDLGVMSIEAFVEKINQEIL</sequence>
<feature type="chain" id="PRO_1000020498" description="Threonine--tRNA ligase">
    <location>
        <begin position="1"/>
        <end position="632"/>
    </location>
</feature>
<feature type="domain" description="TGS" evidence="2">
    <location>
        <begin position="1"/>
        <end position="61"/>
    </location>
</feature>
<feature type="region of interest" description="Catalytic" evidence="1">
    <location>
        <begin position="242"/>
        <end position="533"/>
    </location>
</feature>
<feature type="binding site" evidence="1">
    <location>
        <position position="333"/>
    </location>
    <ligand>
        <name>Zn(2+)</name>
        <dbReference type="ChEBI" id="CHEBI:29105"/>
    </ligand>
</feature>
<feature type="binding site" evidence="1">
    <location>
        <position position="384"/>
    </location>
    <ligand>
        <name>Zn(2+)</name>
        <dbReference type="ChEBI" id="CHEBI:29105"/>
    </ligand>
</feature>
<feature type="binding site" evidence="1">
    <location>
        <position position="510"/>
    </location>
    <ligand>
        <name>Zn(2+)</name>
        <dbReference type="ChEBI" id="CHEBI:29105"/>
    </ligand>
</feature>